<proteinExistence type="evidence at protein level"/>
<protein>
    <recommendedName>
        <fullName>GTP pyrophosphokinase</fullName>
        <ecNumber evidence="11">2.7.6.5</ecNumber>
    </recommendedName>
    <alternativeName>
        <fullName>(p)ppGpp synthase</fullName>
    </alternativeName>
    <alternativeName>
        <fullName>ATP:GTP 3'-pyrophosphotransferase</fullName>
    </alternativeName>
    <alternativeName>
        <fullName>ppGpp synthase I</fullName>
    </alternativeName>
</protein>
<feature type="chain" id="PRO_0000166544" description="GTP pyrophosphokinase">
    <location>
        <begin position="1"/>
        <end position="734"/>
    </location>
</feature>
<feature type="domain" description="HD" evidence="3">
    <location>
        <begin position="50"/>
        <end position="149"/>
    </location>
</feature>
<feature type="domain" description="TGS" evidence="4">
    <location>
        <begin position="392"/>
        <end position="453"/>
    </location>
</feature>
<feature type="domain" description="ACT" evidence="2">
    <location>
        <begin position="660"/>
        <end position="734"/>
    </location>
</feature>
<feature type="region of interest" description="Disordered" evidence="5">
    <location>
        <begin position="552"/>
        <end position="584"/>
    </location>
</feature>
<feature type="compositionally biased region" description="Basic and acidic residues" evidence="5">
    <location>
        <begin position="552"/>
        <end position="567"/>
    </location>
</feature>
<feature type="mutagenesis site" description="Suppresses a dnaA1-yabA deletion mutant, causes an increases in DNA replication elongation." evidence="8">
    <location>
        <begin position="264"/>
        <end position="295"/>
    </location>
</feature>
<feature type="mutagenesis site" description="Wild-type growth rate, this enzyme probably has no synthase activity but can still degrade pppGpp to ppGpp." evidence="6">
    <original>D</original>
    <variation>G</variation>
    <location>
        <position position="264"/>
    </location>
</feature>
<feature type="helix" evidence="12">
    <location>
        <begin position="9"/>
        <end position="16"/>
    </location>
</feature>
<feature type="turn" evidence="12">
    <location>
        <begin position="17"/>
        <end position="19"/>
    </location>
</feature>
<feature type="helix" evidence="12">
    <location>
        <begin position="22"/>
        <end position="38"/>
    </location>
</feature>
<feature type="turn" evidence="12">
    <location>
        <begin position="39"/>
        <end position="41"/>
    </location>
</feature>
<feature type="strand" evidence="12">
    <location>
        <begin position="47"/>
        <end position="49"/>
    </location>
</feature>
<feature type="helix" evidence="12">
    <location>
        <begin position="52"/>
        <end position="63"/>
    </location>
</feature>
<feature type="helix" evidence="12">
    <location>
        <begin position="68"/>
        <end position="75"/>
    </location>
</feature>
<feature type="turn" evidence="12">
    <location>
        <begin position="77"/>
        <end position="81"/>
    </location>
</feature>
<feature type="strand" evidence="12">
    <location>
        <begin position="82"/>
        <end position="84"/>
    </location>
</feature>
<feature type="helix" evidence="12">
    <location>
        <begin position="87"/>
        <end position="93"/>
    </location>
</feature>
<feature type="helix" evidence="12">
    <location>
        <begin position="96"/>
        <end position="109"/>
    </location>
</feature>
<feature type="helix" evidence="12">
    <location>
        <begin position="119"/>
        <end position="131"/>
    </location>
</feature>
<feature type="helix" evidence="12">
    <location>
        <begin position="135"/>
        <end position="150"/>
    </location>
</feature>
<feature type="strand" evidence="12">
    <location>
        <begin position="153"/>
        <end position="155"/>
    </location>
</feature>
<feature type="helix" evidence="12">
    <location>
        <begin position="157"/>
        <end position="169"/>
    </location>
</feature>
<feature type="helix" evidence="12">
    <location>
        <begin position="171"/>
        <end position="178"/>
    </location>
</feature>
<feature type="helix" evidence="12">
    <location>
        <begin position="181"/>
        <end position="195"/>
    </location>
</feature>
<feature type="helix" evidence="12">
    <location>
        <begin position="197"/>
        <end position="209"/>
    </location>
</feature>
<feature type="helix" evidence="12">
    <location>
        <begin position="211"/>
        <end position="231"/>
    </location>
</feature>
<feature type="strand" evidence="12">
    <location>
        <begin position="237"/>
        <end position="240"/>
    </location>
</feature>
<feature type="helix" evidence="12">
    <location>
        <begin position="245"/>
        <end position="253"/>
    </location>
</feature>
<feature type="strand" evidence="12">
    <location>
        <begin position="259"/>
        <end position="261"/>
    </location>
</feature>
<feature type="helix" evidence="12">
    <location>
        <begin position="262"/>
        <end position="264"/>
    </location>
</feature>
<feature type="strand" evidence="12">
    <location>
        <begin position="266"/>
        <end position="274"/>
    </location>
</feature>
<feature type="helix" evidence="12">
    <location>
        <begin position="275"/>
        <end position="288"/>
    </location>
</feature>
<feature type="turn" evidence="12">
    <location>
        <begin position="299"/>
        <end position="301"/>
    </location>
</feature>
<feature type="strand" evidence="12">
    <location>
        <begin position="311"/>
        <end position="315"/>
    </location>
</feature>
<feature type="helix" evidence="12">
    <location>
        <begin position="318"/>
        <end position="320"/>
    </location>
</feature>
<feature type="strand" evidence="12">
    <location>
        <begin position="323"/>
        <end position="329"/>
    </location>
</feature>
<feature type="helix" evidence="12">
    <location>
        <begin position="330"/>
        <end position="338"/>
    </location>
</feature>
<feature type="helix" evidence="12">
    <location>
        <begin position="339"/>
        <end position="341"/>
    </location>
</feature>
<feature type="helix" evidence="12">
    <location>
        <begin position="358"/>
        <end position="361"/>
    </location>
</feature>
<feature type="helix" evidence="12">
    <location>
        <begin position="363"/>
        <end position="369"/>
    </location>
</feature>
<sequence length="734" mass="84824">MANEQVLTAEQVIDKARSYLSDEHIAFVEKAYLYAEDAHREQYRKSGEPYIIHPIQVAGILVDLEMDPSTIAGGFLHDVVEDTDVTLDDLKEAFSEEVAMLVDGVTKLGKIKYKSQEEQQAENHRKMFVAMAQDIRVILIKLADRLHNMRTLKHLPQEKQRRISNETLEIFAPLAHRLGISKIKWELEDTALRYLNPQQYYRIVNLMKKKRAERELYVDEVVNEVKKRVEEVNIKADFSGRPKHIYSIYRKMVLQNKQFNEIYDLLAVRILVNSIKDCYAVLGIIHTCWKPMPGRFKDYIAMPKPNMYQSLHTTVIGPKGDPLEVQIRTFEMHEIAEYGVAAHWAYKEGKAANEGATFEKKLSWFREILEFQNESTDAEEFMESLKIDLFSDMVYVFTPKGDVIELPSGSVPIDFSYRIHSEIGNKTIGAKVNGKMVTLDHKLRTGDIVEILTSKHSYGPSQDWVKLAQTSQAKHKIRQFFKKQRREENVEKGRELVEKEIKNLDFELKDVLTPENIQKVADKFNFSNEEDMYAAVGYNGITALQVANRLTEKERKQRDQEEQEKIVQEVTGEPKPYPQGRKREAGVRVKGIDNLLVRLSKCCNPVPGDDIVGFITKGRGVSVHREDCPNVKTNEAQERLIPVEWEHESQVQKRKEYNVEIEILGYDRRGLLNEVLQAVNETKTNISSVSGKSDRNKVATIHMAIFIQNINHLHKVVERIKQIRDIYSVRRVMN</sequence>
<accession>O54408</accession>
<accession>O32043</accession>
<gene>
    <name evidence="9" type="primary">relA</name>
    <name type="ordered locus">BSU27600</name>
</gene>
<name>RELA_BACSU</name>
<comment type="function">
    <text evidence="1 11">In eubacteria ppGpp (guanosine 3'-diphosphate 5'-diphosphate) is a mediator of the stringent response that coordinates a variety of cellular activities in response to changes in nutritional abundance. This enzyme catalyzes the formation of pppGpp which is then hydrolyzed to form ppGpp, it is probably the hydrolysis activity that is required for optimal growth (Probable).</text>
</comment>
<comment type="catalytic activity">
    <reaction>
        <text>GTP + ATP = guanosine 3'-diphosphate 5'-triphosphate + AMP</text>
        <dbReference type="Rhea" id="RHEA:22088"/>
        <dbReference type="ChEBI" id="CHEBI:30616"/>
        <dbReference type="ChEBI" id="CHEBI:37565"/>
        <dbReference type="ChEBI" id="CHEBI:142410"/>
        <dbReference type="ChEBI" id="CHEBI:456215"/>
        <dbReference type="EC" id="2.7.6.5"/>
    </reaction>
</comment>
<comment type="activity regulation">
    <text evidence="7">Activated by the cyclic di-AMP (c-di-AMP) receptor DarB in the absence of c-di-AMP.</text>
</comment>
<comment type="pathway">
    <text>Purine metabolism; ppGpp biosynthesis; ppGpp from GTP: step 1/2.</text>
</comment>
<comment type="subunit">
    <text evidence="7">Homodimer (PubMed:33619274). At very low potassium concentrations, when intracellular levels of c-di-AMP are low, interacts with apo-DarB (PubMed:33619274). c-di-AMP inhibits the binding of DarB to RelA (PubMed:33619274).</text>
</comment>
<comment type="disruption phenotype">
    <text evidence="6">Decreased growth rate; growth is almost completely restored in a triple relA-yjbM-ywaC mutant (PubMed:18067544).</text>
</comment>
<comment type="similarity">
    <text evidence="10">Belongs to the RelA/SpoT family.</text>
</comment>
<dbReference type="EC" id="2.7.6.5" evidence="11"/>
<dbReference type="EMBL" id="U86377">
    <property type="protein sequence ID" value="AAC46041.1"/>
    <property type="molecule type" value="Genomic_DNA"/>
</dbReference>
<dbReference type="EMBL" id="AL009126">
    <property type="protein sequence ID" value="CAB14719.2"/>
    <property type="molecule type" value="Genomic_DNA"/>
</dbReference>
<dbReference type="PIR" id="C69691">
    <property type="entry name" value="C69691"/>
</dbReference>
<dbReference type="RefSeq" id="WP_003229747.1">
    <property type="nucleotide sequence ID" value="NZ_OZ025638.1"/>
</dbReference>
<dbReference type="PDB" id="6HTQ">
    <property type="method" value="EM"/>
    <property type="resolution" value="4.50 A"/>
    <property type="chains" value="x=391-731"/>
</dbReference>
<dbReference type="PDB" id="6YXA">
    <property type="method" value="X-ray"/>
    <property type="resolution" value="3.95 A"/>
    <property type="chains" value="A=1-556"/>
</dbReference>
<dbReference type="PDB" id="8ACU">
    <property type="method" value="X-ray"/>
    <property type="resolution" value="2.97 A"/>
    <property type="chains" value="A/B=1-373"/>
</dbReference>
<dbReference type="PDBsum" id="6HTQ"/>
<dbReference type="PDBsum" id="6YXA"/>
<dbReference type="PDBsum" id="8ACU"/>
<dbReference type="EMDB" id="EMD-0270"/>
<dbReference type="SMR" id="O54408"/>
<dbReference type="FunCoup" id="O54408">
    <property type="interactions" value="633"/>
</dbReference>
<dbReference type="IntAct" id="O54408">
    <property type="interactions" value="1"/>
</dbReference>
<dbReference type="STRING" id="224308.BSU27600"/>
<dbReference type="jPOST" id="O54408"/>
<dbReference type="PaxDb" id="224308-BSU27600"/>
<dbReference type="EnsemblBacteria" id="CAB14719">
    <property type="protein sequence ID" value="CAB14719"/>
    <property type="gene ID" value="BSU_27600"/>
</dbReference>
<dbReference type="GeneID" id="86872730"/>
<dbReference type="GeneID" id="936753"/>
<dbReference type="KEGG" id="bsu:BSU27600"/>
<dbReference type="PATRIC" id="fig|224308.179.peg.2999"/>
<dbReference type="eggNOG" id="COG0317">
    <property type="taxonomic scope" value="Bacteria"/>
</dbReference>
<dbReference type="InParanoid" id="O54408"/>
<dbReference type="OrthoDB" id="9805041at2"/>
<dbReference type="PhylomeDB" id="O54408"/>
<dbReference type="BioCyc" id="BSUB:BSU27600-MONOMER"/>
<dbReference type="BRENDA" id="2.7.6.5">
    <property type="organism ID" value="658"/>
</dbReference>
<dbReference type="UniPathway" id="UPA00908">
    <property type="reaction ID" value="UER00884"/>
</dbReference>
<dbReference type="Proteomes" id="UP000001570">
    <property type="component" value="Chromosome"/>
</dbReference>
<dbReference type="GO" id="GO:0005524">
    <property type="term" value="F:ATP binding"/>
    <property type="evidence" value="ECO:0007669"/>
    <property type="project" value="UniProtKB-KW"/>
</dbReference>
<dbReference type="GO" id="GO:0005525">
    <property type="term" value="F:GTP binding"/>
    <property type="evidence" value="ECO:0007669"/>
    <property type="project" value="UniProtKB-KW"/>
</dbReference>
<dbReference type="GO" id="GO:0008728">
    <property type="term" value="F:GTP diphosphokinase activity"/>
    <property type="evidence" value="ECO:0007669"/>
    <property type="project" value="UniProtKB-EC"/>
</dbReference>
<dbReference type="GO" id="GO:0016301">
    <property type="term" value="F:kinase activity"/>
    <property type="evidence" value="ECO:0007669"/>
    <property type="project" value="UniProtKB-KW"/>
</dbReference>
<dbReference type="GO" id="GO:0015970">
    <property type="term" value="P:guanosine tetraphosphate biosynthetic process"/>
    <property type="evidence" value="ECO:0007669"/>
    <property type="project" value="UniProtKB-UniPathway"/>
</dbReference>
<dbReference type="CDD" id="cd04876">
    <property type="entry name" value="ACT_RelA-SpoT"/>
    <property type="match status" value="1"/>
</dbReference>
<dbReference type="CDD" id="cd00077">
    <property type="entry name" value="HDc"/>
    <property type="match status" value="1"/>
</dbReference>
<dbReference type="CDD" id="cd05399">
    <property type="entry name" value="NT_Rel-Spo_like"/>
    <property type="match status" value="1"/>
</dbReference>
<dbReference type="CDD" id="cd01668">
    <property type="entry name" value="TGS_RSH"/>
    <property type="match status" value="1"/>
</dbReference>
<dbReference type="FunFam" id="3.10.20.30:FF:000002">
    <property type="entry name" value="GTP pyrophosphokinase (RelA/SpoT)"/>
    <property type="match status" value="1"/>
</dbReference>
<dbReference type="FunFam" id="1.10.3210.10:FF:000001">
    <property type="entry name" value="GTP pyrophosphokinase RelA"/>
    <property type="match status" value="1"/>
</dbReference>
<dbReference type="FunFam" id="3.30.460.10:FF:000001">
    <property type="entry name" value="GTP pyrophosphokinase RelA"/>
    <property type="match status" value="1"/>
</dbReference>
<dbReference type="Gene3D" id="3.10.20.30">
    <property type="match status" value="1"/>
</dbReference>
<dbReference type="Gene3D" id="3.30.70.260">
    <property type="match status" value="1"/>
</dbReference>
<dbReference type="Gene3D" id="3.30.460.10">
    <property type="entry name" value="Beta Polymerase, domain 2"/>
    <property type="match status" value="1"/>
</dbReference>
<dbReference type="Gene3D" id="1.10.3210.10">
    <property type="entry name" value="Hypothetical protein af1432"/>
    <property type="match status" value="1"/>
</dbReference>
<dbReference type="InterPro" id="IPR045865">
    <property type="entry name" value="ACT-like_dom_sf"/>
</dbReference>
<dbReference type="InterPro" id="IPR002912">
    <property type="entry name" value="ACT_dom"/>
</dbReference>
<dbReference type="InterPro" id="IPR012675">
    <property type="entry name" value="Beta-grasp_dom_sf"/>
</dbReference>
<dbReference type="InterPro" id="IPR003607">
    <property type="entry name" value="HD/PDEase_dom"/>
</dbReference>
<dbReference type="InterPro" id="IPR006674">
    <property type="entry name" value="HD_domain"/>
</dbReference>
<dbReference type="InterPro" id="IPR043519">
    <property type="entry name" value="NT_sf"/>
</dbReference>
<dbReference type="InterPro" id="IPR004811">
    <property type="entry name" value="RelA/Spo_fam"/>
</dbReference>
<dbReference type="InterPro" id="IPR045600">
    <property type="entry name" value="RelA/SpoT_AH_RIS"/>
</dbReference>
<dbReference type="InterPro" id="IPR007685">
    <property type="entry name" value="RelA_SpoT"/>
</dbReference>
<dbReference type="InterPro" id="IPR004095">
    <property type="entry name" value="TGS"/>
</dbReference>
<dbReference type="InterPro" id="IPR012676">
    <property type="entry name" value="TGS-like"/>
</dbReference>
<dbReference type="InterPro" id="IPR033655">
    <property type="entry name" value="TGS_RelA/SpoT"/>
</dbReference>
<dbReference type="NCBIfam" id="TIGR00691">
    <property type="entry name" value="spoT_relA"/>
    <property type="match status" value="1"/>
</dbReference>
<dbReference type="PANTHER" id="PTHR21262:SF31">
    <property type="entry name" value="GTP PYROPHOSPHOKINASE"/>
    <property type="match status" value="1"/>
</dbReference>
<dbReference type="PANTHER" id="PTHR21262">
    <property type="entry name" value="GUANOSINE-3',5'-BIS DIPHOSPHATE 3'-PYROPHOSPHOHYDROLASE"/>
    <property type="match status" value="1"/>
</dbReference>
<dbReference type="Pfam" id="PF13291">
    <property type="entry name" value="ACT_4"/>
    <property type="match status" value="1"/>
</dbReference>
<dbReference type="Pfam" id="PF13328">
    <property type="entry name" value="HD_4"/>
    <property type="match status" value="1"/>
</dbReference>
<dbReference type="Pfam" id="PF19296">
    <property type="entry name" value="RelA_AH_RIS"/>
    <property type="match status" value="1"/>
</dbReference>
<dbReference type="Pfam" id="PF04607">
    <property type="entry name" value="RelA_SpoT"/>
    <property type="match status" value="1"/>
</dbReference>
<dbReference type="Pfam" id="PF02824">
    <property type="entry name" value="TGS"/>
    <property type="match status" value="1"/>
</dbReference>
<dbReference type="SMART" id="SM00471">
    <property type="entry name" value="HDc"/>
    <property type="match status" value="1"/>
</dbReference>
<dbReference type="SMART" id="SM00954">
    <property type="entry name" value="RelA_SpoT"/>
    <property type="match status" value="1"/>
</dbReference>
<dbReference type="SUPFAM" id="SSF55021">
    <property type="entry name" value="ACT-like"/>
    <property type="match status" value="1"/>
</dbReference>
<dbReference type="SUPFAM" id="SSF109604">
    <property type="entry name" value="HD-domain/PDEase-like"/>
    <property type="match status" value="1"/>
</dbReference>
<dbReference type="SUPFAM" id="SSF81301">
    <property type="entry name" value="Nucleotidyltransferase"/>
    <property type="match status" value="1"/>
</dbReference>
<dbReference type="SUPFAM" id="SSF81271">
    <property type="entry name" value="TGS-like"/>
    <property type="match status" value="1"/>
</dbReference>
<dbReference type="PROSITE" id="PS51671">
    <property type="entry name" value="ACT"/>
    <property type="match status" value="1"/>
</dbReference>
<dbReference type="PROSITE" id="PS51831">
    <property type="entry name" value="HD"/>
    <property type="match status" value="1"/>
</dbReference>
<dbReference type="PROSITE" id="PS51880">
    <property type="entry name" value="TGS"/>
    <property type="match status" value="1"/>
</dbReference>
<organism>
    <name type="scientific">Bacillus subtilis (strain 168)</name>
    <dbReference type="NCBI Taxonomy" id="224308"/>
    <lineage>
        <taxon>Bacteria</taxon>
        <taxon>Bacillati</taxon>
        <taxon>Bacillota</taxon>
        <taxon>Bacilli</taxon>
        <taxon>Bacillales</taxon>
        <taxon>Bacillaceae</taxon>
        <taxon>Bacillus</taxon>
    </lineage>
</organism>
<evidence type="ECO:0000250" key="1"/>
<evidence type="ECO:0000255" key="2">
    <source>
        <dbReference type="PROSITE-ProRule" id="PRU01007"/>
    </source>
</evidence>
<evidence type="ECO:0000255" key="3">
    <source>
        <dbReference type="PROSITE-ProRule" id="PRU01175"/>
    </source>
</evidence>
<evidence type="ECO:0000255" key="4">
    <source>
        <dbReference type="PROSITE-ProRule" id="PRU01228"/>
    </source>
</evidence>
<evidence type="ECO:0000256" key="5">
    <source>
        <dbReference type="SAM" id="MobiDB-lite"/>
    </source>
</evidence>
<evidence type="ECO:0000269" key="6">
    <source>
    </source>
</evidence>
<evidence type="ECO:0000269" key="7">
    <source>
    </source>
</evidence>
<evidence type="ECO:0000269" key="8">
    <source>
    </source>
</evidence>
<evidence type="ECO:0000303" key="9">
    <source>
    </source>
</evidence>
<evidence type="ECO:0000305" key="10"/>
<evidence type="ECO:0000305" key="11">
    <source>
    </source>
</evidence>
<evidence type="ECO:0007829" key="12">
    <source>
        <dbReference type="PDB" id="8ACU"/>
    </source>
</evidence>
<reference key="1">
    <citation type="journal article" date="1997" name="Mol. Microbiol.">
        <title>Cloning and characterization of a relA/spoT homologue from Bacillus subtilis.</title>
        <authorList>
            <person name="Wendrich T.M."/>
            <person name="Marahiel M.A."/>
        </authorList>
    </citation>
    <scope>NUCLEOTIDE SEQUENCE [GENOMIC DNA]</scope>
    <source>
        <strain>168 / JH642</strain>
    </source>
</reference>
<reference key="2">
    <citation type="journal article" date="1997" name="Nature">
        <title>The complete genome sequence of the Gram-positive bacterium Bacillus subtilis.</title>
        <authorList>
            <person name="Kunst F."/>
            <person name="Ogasawara N."/>
            <person name="Moszer I."/>
            <person name="Albertini A.M."/>
            <person name="Alloni G."/>
            <person name="Azevedo V."/>
            <person name="Bertero M.G."/>
            <person name="Bessieres P."/>
            <person name="Bolotin A."/>
            <person name="Borchert S."/>
            <person name="Borriss R."/>
            <person name="Boursier L."/>
            <person name="Brans A."/>
            <person name="Braun M."/>
            <person name="Brignell S.C."/>
            <person name="Bron S."/>
            <person name="Brouillet S."/>
            <person name="Bruschi C.V."/>
            <person name="Caldwell B."/>
            <person name="Capuano V."/>
            <person name="Carter N.M."/>
            <person name="Choi S.-K."/>
            <person name="Codani J.-J."/>
            <person name="Connerton I.F."/>
            <person name="Cummings N.J."/>
            <person name="Daniel R.A."/>
            <person name="Denizot F."/>
            <person name="Devine K.M."/>
            <person name="Duesterhoeft A."/>
            <person name="Ehrlich S.D."/>
            <person name="Emmerson P.T."/>
            <person name="Entian K.-D."/>
            <person name="Errington J."/>
            <person name="Fabret C."/>
            <person name="Ferrari E."/>
            <person name="Foulger D."/>
            <person name="Fritz C."/>
            <person name="Fujita M."/>
            <person name="Fujita Y."/>
            <person name="Fuma S."/>
            <person name="Galizzi A."/>
            <person name="Galleron N."/>
            <person name="Ghim S.-Y."/>
            <person name="Glaser P."/>
            <person name="Goffeau A."/>
            <person name="Golightly E.J."/>
            <person name="Grandi G."/>
            <person name="Guiseppi G."/>
            <person name="Guy B.J."/>
            <person name="Haga K."/>
            <person name="Haiech J."/>
            <person name="Harwood C.R."/>
            <person name="Henaut A."/>
            <person name="Hilbert H."/>
            <person name="Holsappel S."/>
            <person name="Hosono S."/>
            <person name="Hullo M.-F."/>
            <person name="Itaya M."/>
            <person name="Jones L.-M."/>
            <person name="Joris B."/>
            <person name="Karamata D."/>
            <person name="Kasahara Y."/>
            <person name="Klaerr-Blanchard M."/>
            <person name="Klein C."/>
            <person name="Kobayashi Y."/>
            <person name="Koetter P."/>
            <person name="Koningstein G."/>
            <person name="Krogh S."/>
            <person name="Kumano M."/>
            <person name="Kurita K."/>
            <person name="Lapidus A."/>
            <person name="Lardinois S."/>
            <person name="Lauber J."/>
            <person name="Lazarevic V."/>
            <person name="Lee S.-M."/>
            <person name="Levine A."/>
            <person name="Liu H."/>
            <person name="Masuda S."/>
            <person name="Mauel C."/>
            <person name="Medigue C."/>
            <person name="Medina N."/>
            <person name="Mellado R.P."/>
            <person name="Mizuno M."/>
            <person name="Moestl D."/>
            <person name="Nakai S."/>
            <person name="Noback M."/>
            <person name="Noone D."/>
            <person name="O'Reilly M."/>
            <person name="Ogawa K."/>
            <person name="Ogiwara A."/>
            <person name="Oudega B."/>
            <person name="Park S.-H."/>
            <person name="Parro V."/>
            <person name="Pohl T.M."/>
            <person name="Portetelle D."/>
            <person name="Porwollik S."/>
            <person name="Prescott A.M."/>
            <person name="Presecan E."/>
            <person name="Pujic P."/>
            <person name="Purnelle B."/>
            <person name="Rapoport G."/>
            <person name="Rey M."/>
            <person name="Reynolds S."/>
            <person name="Rieger M."/>
            <person name="Rivolta C."/>
            <person name="Rocha E."/>
            <person name="Roche B."/>
            <person name="Rose M."/>
            <person name="Sadaie Y."/>
            <person name="Sato T."/>
            <person name="Scanlan E."/>
            <person name="Schleich S."/>
            <person name="Schroeter R."/>
            <person name="Scoffone F."/>
            <person name="Sekiguchi J."/>
            <person name="Sekowska A."/>
            <person name="Seror S.J."/>
            <person name="Serror P."/>
            <person name="Shin B.-S."/>
            <person name="Soldo B."/>
            <person name="Sorokin A."/>
            <person name="Tacconi E."/>
            <person name="Takagi T."/>
            <person name="Takahashi H."/>
            <person name="Takemaru K."/>
            <person name="Takeuchi M."/>
            <person name="Tamakoshi A."/>
            <person name="Tanaka T."/>
            <person name="Terpstra P."/>
            <person name="Tognoni A."/>
            <person name="Tosato V."/>
            <person name="Uchiyama S."/>
            <person name="Vandenbol M."/>
            <person name="Vannier F."/>
            <person name="Vassarotti A."/>
            <person name="Viari A."/>
            <person name="Wambutt R."/>
            <person name="Wedler E."/>
            <person name="Wedler H."/>
            <person name="Weitzenegger T."/>
            <person name="Winters P."/>
            <person name="Wipat A."/>
            <person name="Yamamoto H."/>
            <person name="Yamane K."/>
            <person name="Yasumoto K."/>
            <person name="Yata K."/>
            <person name="Yoshida K."/>
            <person name="Yoshikawa H.-F."/>
            <person name="Zumstein E."/>
            <person name="Yoshikawa H."/>
            <person name="Danchin A."/>
        </authorList>
    </citation>
    <scope>NUCLEOTIDE SEQUENCE [LARGE SCALE GENOMIC DNA]</scope>
    <source>
        <strain>168</strain>
    </source>
</reference>
<reference key="3">
    <citation type="journal article" date="2009" name="Microbiology">
        <title>From a consortium sequence to a unified sequence: the Bacillus subtilis 168 reference genome a decade later.</title>
        <authorList>
            <person name="Barbe V."/>
            <person name="Cruveiller S."/>
            <person name="Kunst F."/>
            <person name="Lenoble P."/>
            <person name="Meurice G."/>
            <person name="Sekowska A."/>
            <person name="Vallenet D."/>
            <person name="Wang T."/>
            <person name="Moszer I."/>
            <person name="Medigue C."/>
            <person name="Danchin A."/>
        </authorList>
    </citation>
    <scope>SEQUENCE REVISION TO 320</scope>
</reference>
<reference key="4">
    <citation type="journal article" date="2008" name="Mol. Microbiol.">
        <title>Identification and functional analysis of novel (p)ppGpp synthetase genes in Bacillus subtilis.</title>
        <authorList>
            <person name="Nanamiya H."/>
            <person name="Kasai K."/>
            <person name="Nozawa A."/>
            <person name="Yun C.S."/>
            <person name="Narisawa T."/>
            <person name="Murakami K."/>
            <person name="Natori Y."/>
            <person name="Kawamura F."/>
            <person name="Tozawa Y."/>
        </authorList>
    </citation>
    <scope>FUNCTION</scope>
    <scope>DISRUPTION PHENOTYPE</scope>
    <scope>MUTAGENESIS OF ASP-264</scope>
    <source>
        <strain>168</strain>
    </source>
</reference>
<reference key="5">
    <citation type="journal article" date="2021" name="Nat. Commun.">
        <title>A meet-up of two second messengers: the c-di-AMP receptor DarB controls (p)ppGpp synthesis in Bacillus subtilis.</title>
        <authorList>
            <person name="Krueger L."/>
            <person name="Herzberg C."/>
            <person name="Wicke D."/>
            <person name="Baehre H."/>
            <person name="Heidemann J.L."/>
            <person name="Dickmanns A."/>
            <person name="Schmitt K."/>
            <person name="Ficner R."/>
            <person name="Stuelke J."/>
        </authorList>
    </citation>
    <scope>ACTIVITY REGULATION</scope>
    <scope>SUBUNIT</scope>
    <scope>INTERACTION WITH APO-DARB</scope>
</reference>
<reference key="6">
    <citation type="journal article" date="2022" name="Mol. Microbiol.">
        <title>Multiple mechanisms for overcoming lethal over-initiation of DNA replication.</title>
        <authorList>
            <person name="Anderson M.E."/>
            <person name="Smith J.L."/>
            <person name="Grossman A.D."/>
        </authorList>
    </citation>
    <scope>MUTAGENESIS OF 264-ASP--ARG-295</scope>
    <source>
        <strain>168 / JH642</strain>
    </source>
</reference>
<keyword id="KW-0002">3D-structure</keyword>
<keyword id="KW-0067">ATP-binding</keyword>
<keyword id="KW-0342">GTP-binding</keyword>
<keyword id="KW-0418">Kinase</keyword>
<keyword id="KW-0547">Nucleotide-binding</keyword>
<keyword id="KW-1185">Reference proteome</keyword>
<keyword id="KW-0808">Transferase</keyword>